<reference key="1">
    <citation type="submission" date="2007-06" db="EMBL/GenBank/DDBJ databases">
        <title>Complete sequence of Sinorhizobium medicae WSM419 chromosome.</title>
        <authorList>
            <consortium name="US DOE Joint Genome Institute"/>
            <person name="Copeland A."/>
            <person name="Lucas S."/>
            <person name="Lapidus A."/>
            <person name="Barry K."/>
            <person name="Glavina del Rio T."/>
            <person name="Dalin E."/>
            <person name="Tice H."/>
            <person name="Pitluck S."/>
            <person name="Chain P."/>
            <person name="Malfatti S."/>
            <person name="Shin M."/>
            <person name="Vergez L."/>
            <person name="Schmutz J."/>
            <person name="Larimer F."/>
            <person name="Land M."/>
            <person name="Hauser L."/>
            <person name="Kyrpides N."/>
            <person name="Mikhailova N."/>
            <person name="Reeve W.G."/>
            <person name="Richardson P."/>
        </authorList>
    </citation>
    <scope>NUCLEOTIDE SEQUENCE [LARGE SCALE GENOMIC DNA]</scope>
    <source>
        <strain>WSM419</strain>
    </source>
</reference>
<feature type="chain" id="PRO_1000145221" description="Urease accessory protein UreG">
    <location>
        <begin position="1"/>
        <end position="203"/>
    </location>
</feature>
<feature type="binding site" evidence="1">
    <location>
        <begin position="14"/>
        <end position="21"/>
    </location>
    <ligand>
        <name>GTP</name>
        <dbReference type="ChEBI" id="CHEBI:37565"/>
    </ligand>
</feature>
<evidence type="ECO:0000255" key="1">
    <source>
        <dbReference type="HAMAP-Rule" id="MF_01389"/>
    </source>
</evidence>
<protein>
    <recommendedName>
        <fullName evidence="1">Urease accessory protein UreG</fullName>
    </recommendedName>
</protein>
<dbReference type="EMBL" id="CP000738">
    <property type="protein sequence ID" value="ABR61209.1"/>
    <property type="molecule type" value="Genomic_DNA"/>
</dbReference>
<dbReference type="RefSeq" id="WP_012066600.1">
    <property type="nucleotide sequence ID" value="NC_009636.1"/>
</dbReference>
<dbReference type="RefSeq" id="YP_001328044.1">
    <property type="nucleotide sequence ID" value="NC_009636.1"/>
</dbReference>
<dbReference type="SMR" id="A6UC29"/>
<dbReference type="STRING" id="366394.Smed_2377"/>
<dbReference type="GeneID" id="61611383"/>
<dbReference type="KEGG" id="smd:Smed_2377"/>
<dbReference type="PATRIC" id="fig|366394.8.peg.5558"/>
<dbReference type="eggNOG" id="COG0378">
    <property type="taxonomic scope" value="Bacteria"/>
</dbReference>
<dbReference type="HOGENOM" id="CLU_072144_1_0_5"/>
<dbReference type="OrthoDB" id="9802035at2"/>
<dbReference type="Proteomes" id="UP000001108">
    <property type="component" value="Chromosome"/>
</dbReference>
<dbReference type="GO" id="GO:0005737">
    <property type="term" value="C:cytoplasm"/>
    <property type="evidence" value="ECO:0007669"/>
    <property type="project" value="UniProtKB-SubCell"/>
</dbReference>
<dbReference type="GO" id="GO:0005525">
    <property type="term" value="F:GTP binding"/>
    <property type="evidence" value="ECO:0007669"/>
    <property type="project" value="UniProtKB-KW"/>
</dbReference>
<dbReference type="GO" id="GO:0003924">
    <property type="term" value="F:GTPase activity"/>
    <property type="evidence" value="ECO:0007669"/>
    <property type="project" value="InterPro"/>
</dbReference>
<dbReference type="GO" id="GO:0016151">
    <property type="term" value="F:nickel cation binding"/>
    <property type="evidence" value="ECO:0007669"/>
    <property type="project" value="UniProtKB-UniRule"/>
</dbReference>
<dbReference type="GO" id="GO:0043419">
    <property type="term" value="P:urea catabolic process"/>
    <property type="evidence" value="ECO:0007669"/>
    <property type="project" value="InterPro"/>
</dbReference>
<dbReference type="CDD" id="cd05540">
    <property type="entry name" value="UreG"/>
    <property type="match status" value="1"/>
</dbReference>
<dbReference type="FunFam" id="3.40.50.300:FF:000208">
    <property type="entry name" value="Urease accessory protein UreG"/>
    <property type="match status" value="1"/>
</dbReference>
<dbReference type="Gene3D" id="3.40.50.300">
    <property type="entry name" value="P-loop containing nucleotide triphosphate hydrolases"/>
    <property type="match status" value="1"/>
</dbReference>
<dbReference type="HAMAP" id="MF_01389">
    <property type="entry name" value="UreG"/>
    <property type="match status" value="1"/>
</dbReference>
<dbReference type="InterPro" id="IPR003495">
    <property type="entry name" value="CobW/HypB/UreG_nucleotide-bd"/>
</dbReference>
<dbReference type="InterPro" id="IPR027417">
    <property type="entry name" value="P-loop_NTPase"/>
</dbReference>
<dbReference type="InterPro" id="IPR004400">
    <property type="entry name" value="UreG"/>
</dbReference>
<dbReference type="NCBIfam" id="TIGR00101">
    <property type="entry name" value="ureG"/>
    <property type="match status" value="1"/>
</dbReference>
<dbReference type="PANTHER" id="PTHR31715">
    <property type="entry name" value="UREASE ACCESSORY PROTEIN G"/>
    <property type="match status" value="1"/>
</dbReference>
<dbReference type="PANTHER" id="PTHR31715:SF0">
    <property type="entry name" value="UREASE ACCESSORY PROTEIN G"/>
    <property type="match status" value="1"/>
</dbReference>
<dbReference type="Pfam" id="PF02492">
    <property type="entry name" value="cobW"/>
    <property type="match status" value="1"/>
</dbReference>
<dbReference type="PIRSF" id="PIRSF005624">
    <property type="entry name" value="Ni-bind_GTPase"/>
    <property type="match status" value="1"/>
</dbReference>
<dbReference type="SUPFAM" id="SSF52540">
    <property type="entry name" value="P-loop containing nucleoside triphosphate hydrolases"/>
    <property type="match status" value="1"/>
</dbReference>
<organism>
    <name type="scientific">Sinorhizobium medicae (strain WSM419)</name>
    <name type="common">Ensifer medicae</name>
    <dbReference type="NCBI Taxonomy" id="366394"/>
    <lineage>
        <taxon>Bacteria</taxon>
        <taxon>Pseudomonadati</taxon>
        <taxon>Pseudomonadota</taxon>
        <taxon>Alphaproteobacteria</taxon>
        <taxon>Hyphomicrobiales</taxon>
        <taxon>Rhizobiaceae</taxon>
        <taxon>Sinorhizobium/Ensifer group</taxon>
        <taxon>Sinorhizobium</taxon>
    </lineage>
</organism>
<name>UREG_SINMW</name>
<proteinExistence type="inferred from homology"/>
<comment type="function">
    <text evidence="1">Facilitates the functional incorporation of the urease nickel metallocenter. This process requires GTP hydrolysis, probably effectuated by UreG.</text>
</comment>
<comment type="subunit">
    <text evidence="1">Homodimer. UreD, UreF and UreG form a complex that acts as a GTP-hydrolysis-dependent molecular chaperone, activating the urease apoprotein by helping to assemble the nickel containing metallocenter of UreC. The UreE protein probably delivers the nickel.</text>
</comment>
<comment type="subcellular location">
    <subcellularLocation>
        <location evidence="1">Cytoplasm</location>
    </subcellularLocation>
</comment>
<comment type="similarity">
    <text evidence="1">Belongs to the SIMIBI class G3E GTPase family. UreG subfamily.</text>
</comment>
<gene>
    <name evidence="1" type="primary">ureG</name>
    <name type="ordered locus">Smed_2377</name>
</gene>
<sequence length="203" mass="21896">MPSKNGPLRVGIGGPVGSGKTALTEKLCKAMRERYSLAVVTNDIYTKEDAEALVRMQALPSERIVGVETGGCPHTAIREDASINLQAIADLNRRLPELDLVFIESGGDNLAATFSPDLADLTIYVISVCQGEEIPRKGGPGITKSDLLVINKKDLAPHVGADLEIMERDAARMRGEKPFVFSDMKRGDGVERIVDFLILHGGL</sequence>
<keyword id="KW-0143">Chaperone</keyword>
<keyword id="KW-0963">Cytoplasm</keyword>
<keyword id="KW-0342">GTP-binding</keyword>
<keyword id="KW-0996">Nickel insertion</keyword>
<keyword id="KW-0547">Nucleotide-binding</keyword>
<accession>A6UC29</accession>